<comment type="subunit">
    <text evidence="1">Part of the 50S ribosomal subunit.</text>
</comment>
<comment type="similarity">
    <text evidence="1">Belongs to the universal ribosomal protein uL30 family.</text>
</comment>
<sequence length="65" mass="7325">MGKLRVTYVKSAIGYARDQKETLAALGLRRLNQSVLKPDNPSVRGMLFKVQHLVKVEEVEDEVQA</sequence>
<proteinExistence type="inferred from homology"/>
<accession>A9WH84</accession>
<dbReference type="EMBL" id="CP000909">
    <property type="protein sequence ID" value="ABY35596.1"/>
    <property type="molecule type" value="Genomic_DNA"/>
</dbReference>
<dbReference type="RefSeq" id="WP_012258249.1">
    <property type="nucleotide sequence ID" value="NC_010175.1"/>
</dbReference>
<dbReference type="RefSeq" id="YP_001635985.1">
    <property type="nucleotide sequence ID" value="NC_010175.1"/>
</dbReference>
<dbReference type="SMR" id="A9WH84"/>
<dbReference type="FunCoup" id="A9WH84">
    <property type="interactions" value="277"/>
</dbReference>
<dbReference type="STRING" id="324602.Caur_2387"/>
<dbReference type="EnsemblBacteria" id="ABY35596">
    <property type="protein sequence ID" value="ABY35596"/>
    <property type="gene ID" value="Caur_2387"/>
</dbReference>
<dbReference type="KEGG" id="cau:Caur_2387"/>
<dbReference type="PATRIC" id="fig|324602.8.peg.2701"/>
<dbReference type="eggNOG" id="COG1841">
    <property type="taxonomic scope" value="Bacteria"/>
</dbReference>
<dbReference type="HOGENOM" id="CLU_131047_2_0_0"/>
<dbReference type="InParanoid" id="A9WH84"/>
<dbReference type="Proteomes" id="UP000002008">
    <property type="component" value="Chromosome"/>
</dbReference>
<dbReference type="GO" id="GO:0022625">
    <property type="term" value="C:cytosolic large ribosomal subunit"/>
    <property type="evidence" value="ECO:0000318"/>
    <property type="project" value="GO_Central"/>
</dbReference>
<dbReference type="GO" id="GO:0003735">
    <property type="term" value="F:structural constituent of ribosome"/>
    <property type="evidence" value="ECO:0007669"/>
    <property type="project" value="InterPro"/>
</dbReference>
<dbReference type="GO" id="GO:0006412">
    <property type="term" value="P:translation"/>
    <property type="evidence" value="ECO:0007669"/>
    <property type="project" value="UniProtKB-UniRule"/>
</dbReference>
<dbReference type="CDD" id="cd01658">
    <property type="entry name" value="Ribosomal_L30"/>
    <property type="match status" value="1"/>
</dbReference>
<dbReference type="FunFam" id="3.30.1390.20:FF:000001">
    <property type="entry name" value="50S ribosomal protein L30"/>
    <property type="match status" value="1"/>
</dbReference>
<dbReference type="Gene3D" id="3.30.1390.20">
    <property type="entry name" value="Ribosomal protein L30, ferredoxin-like fold domain"/>
    <property type="match status" value="1"/>
</dbReference>
<dbReference type="HAMAP" id="MF_01371_B">
    <property type="entry name" value="Ribosomal_uL30_B"/>
    <property type="match status" value="1"/>
</dbReference>
<dbReference type="InterPro" id="IPR036919">
    <property type="entry name" value="Ribo_uL30_ferredoxin-like_sf"/>
</dbReference>
<dbReference type="InterPro" id="IPR005996">
    <property type="entry name" value="Ribosomal_uL30_bac-type"/>
</dbReference>
<dbReference type="InterPro" id="IPR018038">
    <property type="entry name" value="Ribosomal_uL30_CS"/>
</dbReference>
<dbReference type="InterPro" id="IPR016082">
    <property type="entry name" value="Ribosomal_uL30_ferredoxin-like"/>
</dbReference>
<dbReference type="NCBIfam" id="TIGR01308">
    <property type="entry name" value="rpmD_bact"/>
    <property type="match status" value="1"/>
</dbReference>
<dbReference type="PANTHER" id="PTHR15892:SF2">
    <property type="entry name" value="LARGE RIBOSOMAL SUBUNIT PROTEIN UL30M"/>
    <property type="match status" value="1"/>
</dbReference>
<dbReference type="PANTHER" id="PTHR15892">
    <property type="entry name" value="MITOCHONDRIAL RIBOSOMAL PROTEIN L30"/>
    <property type="match status" value="1"/>
</dbReference>
<dbReference type="Pfam" id="PF00327">
    <property type="entry name" value="Ribosomal_L30"/>
    <property type="match status" value="1"/>
</dbReference>
<dbReference type="PIRSF" id="PIRSF002211">
    <property type="entry name" value="Ribosomal_L30_bac-type"/>
    <property type="match status" value="1"/>
</dbReference>
<dbReference type="SUPFAM" id="SSF55129">
    <property type="entry name" value="Ribosomal protein L30p/L7e"/>
    <property type="match status" value="1"/>
</dbReference>
<dbReference type="PROSITE" id="PS00634">
    <property type="entry name" value="RIBOSOMAL_L30"/>
    <property type="match status" value="1"/>
</dbReference>
<protein>
    <recommendedName>
        <fullName evidence="1">Large ribosomal subunit protein uL30</fullName>
    </recommendedName>
    <alternativeName>
        <fullName evidence="2">50S ribosomal protein L30</fullName>
    </alternativeName>
</protein>
<name>RL30_CHLAA</name>
<organism>
    <name type="scientific">Chloroflexus aurantiacus (strain ATCC 29366 / DSM 635 / J-10-fl)</name>
    <dbReference type="NCBI Taxonomy" id="324602"/>
    <lineage>
        <taxon>Bacteria</taxon>
        <taxon>Bacillati</taxon>
        <taxon>Chloroflexota</taxon>
        <taxon>Chloroflexia</taxon>
        <taxon>Chloroflexales</taxon>
        <taxon>Chloroflexineae</taxon>
        <taxon>Chloroflexaceae</taxon>
        <taxon>Chloroflexus</taxon>
    </lineage>
</organism>
<feature type="chain" id="PRO_0000347092" description="Large ribosomal subunit protein uL30">
    <location>
        <begin position="1"/>
        <end position="65"/>
    </location>
</feature>
<gene>
    <name evidence="1" type="primary">rpmD</name>
    <name type="ordered locus">Caur_2387</name>
</gene>
<keyword id="KW-1185">Reference proteome</keyword>
<keyword id="KW-0687">Ribonucleoprotein</keyword>
<keyword id="KW-0689">Ribosomal protein</keyword>
<reference key="1">
    <citation type="journal article" date="2011" name="BMC Genomics">
        <title>Complete genome sequence of the filamentous anoxygenic phototrophic bacterium Chloroflexus aurantiacus.</title>
        <authorList>
            <person name="Tang K.H."/>
            <person name="Barry K."/>
            <person name="Chertkov O."/>
            <person name="Dalin E."/>
            <person name="Han C.S."/>
            <person name="Hauser L.J."/>
            <person name="Honchak B.M."/>
            <person name="Karbach L.E."/>
            <person name="Land M.L."/>
            <person name="Lapidus A."/>
            <person name="Larimer F.W."/>
            <person name="Mikhailova N."/>
            <person name="Pitluck S."/>
            <person name="Pierson B.K."/>
            <person name="Blankenship R.E."/>
        </authorList>
    </citation>
    <scope>NUCLEOTIDE SEQUENCE [LARGE SCALE GENOMIC DNA]</scope>
    <source>
        <strain>ATCC 29366 / DSM 635 / J-10-fl</strain>
    </source>
</reference>
<evidence type="ECO:0000255" key="1">
    <source>
        <dbReference type="HAMAP-Rule" id="MF_01371"/>
    </source>
</evidence>
<evidence type="ECO:0000305" key="2"/>